<name>STUA_TALMA</name>
<evidence type="ECO:0000250" key="1">
    <source>
        <dbReference type="UniProtKB" id="P36011"/>
    </source>
</evidence>
<evidence type="ECO:0000255" key="2">
    <source>
        <dbReference type="PROSITE-ProRule" id="PRU00630"/>
    </source>
</evidence>
<evidence type="ECO:0000256" key="3">
    <source>
        <dbReference type="SAM" id="MobiDB-lite"/>
    </source>
</evidence>
<evidence type="ECO:0000269" key="4">
    <source>
    </source>
</evidence>
<evidence type="ECO:0000269" key="5">
    <source>
    </source>
</evidence>
<evidence type="ECO:0000303" key="6">
    <source>
    </source>
</evidence>
<evidence type="ECO:0000305" key="7"/>
<protein>
    <recommendedName>
        <fullName evidence="7">Cell pattern formation-associated protein stuA</fullName>
    </recommendedName>
    <alternativeName>
        <fullName evidence="1">Stunted protein A</fullName>
    </alternativeName>
</protein>
<reference key="1">
    <citation type="journal article" date="2002" name="Mol. Microbiol.">
        <title>A basic helix-loop-helix protein with similarity to the fungal morphological regulators, Phd1p, Efg1p and StuA, controls conidiation but not dimorphic growth in Penicillium marneffei.</title>
        <authorList>
            <person name="Borneman A.R."/>
            <person name="Hynes M.J."/>
            <person name="Andrianopoulos A."/>
        </authorList>
    </citation>
    <scope>NUCLEOTIDE SEQUENCE [GENOMIC DNA]</scope>
    <scope>INDUCTION</scope>
    <scope>FUNCTION</scope>
    <scope>DISRUPTION PHENOTYPE</scope>
</reference>
<reference key="2">
    <citation type="journal article" date="2010" name="Med. Mycol.">
        <title>An improved Agrobacterium-mediated transformation system for the functional genetic analysis of Penicillium marneffei.</title>
        <authorList>
            <person name="Kummasook A."/>
            <person name="Cooper C.R. Jr."/>
            <person name="Vanittanakom N."/>
        </authorList>
    </citation>
    <scope>FUNCTION</scope>
    <scope>DISRUPTION PHENOTYPE</scope>
</reference>
<dbReference type="EMBL" id="AF436076">
    <property type="protein sequence ID" value="AAM27919.1"/>
    <property type="molecule type" value="Genomic_DNA"/>
</dbReference>
<dbReference type="SMR" id="Q8NKF5"/>
<dbReference type="VEuPathDB" id="FungiDB:PMAA_070290"/>
<dbReference type="OrthoDB" id="5407653at2759"/>
<dbReference type="GO" id="GO:0005634">
    <property type="term" value="C:nucleus"/>
    <property type="evidence" value="ECO:0007669"/>
    <property type="project" value="UniProtKB-SubCell"/>
</dbReference>
<dbReference type="GO" id="GO:0003700">
    <property type="term" value="F:DNA-binding transcription factor activity"/>
    <property type="evidence" value="ECO:0007669"/>
    <property type="project" value="TreeGrafter"/>
</dbReference>
<dbReference type="GO" id="GO:0043565">
    <property type="term" value="F:sequence-specific DNA binding"/>
    <property type="evidence" value="ECO:0007669"/>
    <property type="project" value="TreeGrafter"/>
</dbReference>
<dbReference type="GO" id="GO:0048315">
    <property type="term" value="P:conidium formation"/>
    <property type="evidence" value="ECO:0007669"/>
    <property type="project" value="UniProtKB-KW"/>
</dbReference>
<dbReference type="GO" id="GO:0045944">
    <property type="term" value="P:positive regulation of transcription by RNA polymerase II"/>
    <property type="evidence" value="ECO:0007669"/>
    <property type="project" value="TreeGrafter"/>
</dbReference>
<dbReference type="GO" id="GO:0030435">
    <property type="term" value="P:sporulation resulting in formation of a cellular spore"/>
    <property type="evidence" value="ECO:0007669"/>
    <property type="project" value="UniProtKB-KW"/>
</dbReference>
<dbReference type="FunFam" id="3.10.260.10:FF:000003">
    <property type="entry name" value="Ascospore maturation 1 protein"/>
    <property type="match status" value="1"/>
</dbReference>
<dbReference type="Gene3D" id="3.10.260.10">
    <property type="entry name" value="Transcription regulator HTH, APSES-type DNA-binding domain"/>
    <property type="match status" value="1"/>
</dbReference>
<dbReference type="InterPro" id="IPR029790">
    <property type="entry name" value="EFG1/Phd1/StuA"/>
</dbReference>
<dbReference type="InterPro" id="IPR036887">
    <property type="entry name" value="HTH_APSES_sf"/>
</dbReference>
<dbReference type="InterPro" id="IPR018004">
    <property type="entry name" value="KilA/APSES_HTH"/>
</dbReference>
<dbReference type="InterPro" id="IPR003163">
    <property type="entry name" value="Tscrpt_reg_HTH_APSES-type"/>
</dbReference>
<dbReference type="PANTHER" id="PTHR47792">
    <property type="entry name" value="PROTEIN SOK2-RELATED"/>
    <property type="match status" value="1"/>
</dbReference>
<dbReference type="PANTHER" id="PTHR47792:SF1">
    <property type="entry name" value="PROTEIN SOK2-RELATED"/>
    <property type="match status" value="1"/>
</dbReference>
<dbReference type="Pfam" id="PF04383">
    <property type="entry name" value="KilA-N"/>
    <property type="match status" value="1"/>
</dbReference>
<dbReference type="SMART" id="SM01252">
    <property type="entry name" value="KilA-N"/>
    <property type="match status" value="1"/>
</dbReference>
<dbReference type="SUPFAM" id="SSF54616">
    <property type="entry name" value="DNA-binding domain of Mlu1-box binding protein MBP1"/>
    <property type="match status" value="1"/>
</dbReference>
<dbReference type="PROSITE" id="PS51299">
    <property type="entry name" value="HTH_APSES"/>
    <property type="match status" value="1"/>
</dbReference>
<feature type="chain" id="PRO_0000435983" description="Cell pattern formation-associated protein stuA">
    <location>
        <begin position="1"/>
        <end position="632"/>
    </location>
</feature>
<feature type="domain" description="HTH APSES-type" evidence="2">
    <location>
        <begin position="128"/>
        <end position="234"/>
    </location>
</feature>
<feature type="DNA-binding region" description="H-T-H motif" evidence="2">
    <location>
        <begin position="162"/>
        <end position="183"/>
    </location>
</feature>
<feature type="region of interest" description="Disordered" evidence="3">
    <location>
        <begin position="1"/>
        <end position="27"/>
    </location>
</feature>
<feature type="region of interest" description="Disordered" evidence="3">
    <location>
        <begin position="246"/>
        <end position="315"/>
    </location>
</feature>
<feature type="region of interest" description="Disordered" evidence="3">
    <location>
        <begin position="340"/>
        <end position="386"/>
    </location>
</feature>
<feature type="region of interest" description="Disordered" evidence="3">
    <location>
        <begin position="403"/>
        <end position="460"/>
    </location>
</feature>
<feature type="region of interest" description="Disordered" evidence="3">
    <location>
        <begin position="473"/>
        <end position="632"/>
    </location>
</feature>
<feature type="region of interest" description="Nuclear localization domain" evidence="1">
    <location>
        <begin position="578"/>
        <end position="604"/>
    </location>
</feature>
<feature type="compositionally biased region" description="Polar residues" evidence="3">
    <location>
        <begin position="1"/>
        <end position="20"/>
    </location>
</feature>
<feature type="compositionally biased region" description="Polar residues" evidence="3">
    <location>
        <begin position="254"/>
        <end position="264"/>
    </location>
</feature>
<feature type="compositionally biased region" description="Polar residues" evidence="3">
    <location>
        <begin position="275"/>
        <end position="295"/>
    </location>
</feature>
<feature type="compositionally biased region" description="Polar residues" evidence="3">
    <location>
        <begin position="340"/>
        <end position="354"/>
    </location>
</feature>
<feature type="compositionally biased region" description="Polar residues" evidence="3">
    <location>
        <begin position="364"/>
        <end position="376"/>
    </location>
</feature>
<feature type="compositionally biased region" description="Low complexity" evidence="3">
    <location>
        <begin position="377"/>
        <end position="386"/>
    </location>
</feature>
<feature type="compositionally biased region" description="Basic and acidic residues" evidence="3">
    <location>
        <begin position="428"/>
        <end position="438"/>
    </location>
</feature>
<feature type="compositionally biased region" description="Polar residues" evidence="3">
    <location>
        <begin position="473"/>
        <end position="506"/>
    </location>
</feature>
<feature type="compositionally biased region" description="Low complexity" evidence="3">
    <location>
        <begin position="558"/>
        <end position="576"/>
    </location>
</feature>
<feature type="compositionally biased region" description="Basic and acidic residues" evidence="3">
    <location>
        <begin position="579"/>
        <end position="600"/>
    </location>
</feature>
<organism>
    <name type="scientific">Talaromyces marneffei</name>
    <name type="common">Penicillium marneffei</name>
    <dbReference type="NCBI Taxonomy" id="37727"/>
    <lineage>
        <taxon>Eukaryota</taxon>
        <taxon>Fungi</taxon>
        <taxon>Dikarya</taxon>
        <taxon>Ascomycota</taxon>
        <taxon>Pezizomycotina</taxon>
        <taxon>Eurotiomycetes</taxon>
        <taxon>Eurotiomycetidae</taxon>
        <taxon>Eurotiales</taxon>
        <taxon>Trichocomaceae</taxon>
        <taxon>Talaromyces</taxon>
        <taxon>Talaromyces sect. Talaromyces</taxon>
    </lineage>
</organism>
<proteinExistence type="evidence at transcript level"/>
<gene>
    <name evidence="6" type="primary">stuA</name>
</gene>
<keyword id="KW-0183">Conidiation</keyword>
<keyword id="KW-0238">DNA-binding</keyword>
<keyword id="KW-0539">Nucleus</keyword>
<keyword id="KW-0749">Sporulation</keyword>
<keyword id="KW-0804">Transcription</keyword>
<keyword id="KW-0805">Transcription regulation</keyword>
<comment type="function">
    <text evidence="1 4 5">Transcription factor that regulates asexual reproduction (PubMed:11994146, PubMed:20465521). Binds the StuA-response elements (StRE) with the consensus sequence 5'-(A/T)CGCG(T/A)N(A/C)-3' at the promoters of target genes (By similarity). Required for accurate spatial organization of the developing conidiophore (PubMed:11994146, PubMed:20465521). Primarily involved in the formation of the uninucleate sterigmata, which arise by budding in this multicellular structure (PubMed:11994146). Required for metula and phialide formation during conidiation but is not required for dimorphic growth (PubMed:11994146).</text>
</comment>
<comment type="subcellular location">
    <subcellularLocation>
        <location evidence="1">Nucleus</location>
    </subcellularLocation>
</comment>
<comment type="induction">
    <text evidence="4">Only expressed at detectable levels in conidiating cells, but not in vegetative hyphae or yeast cells (PubMed:11994146).</text>
</comment>
<comment type="disruption phenotype">
    <text evidence="4 5">Leads to conidiophores that lack both metulae and phialides and that consist of a stalk from which chains of conidia bud directly (PubMed:11994146, PubMed:20465521).</text>
</comment>
<comment type="similarity">
    <text evidence="7">Belongs to the EFG1/PHD1/stuA family.</text>
</comment>
<accession>Q8NKF5</accession>
<sequence>MNQTQSYMDVHTSHFSSPQPYGSHGATAGGMVPYSHYQQPPPLLPPGSAGYPSTPGSYSYPYSNGVASTTQPASNSISSQVPAQILPLPAMTSHTVTPHGYVSGAAQSQQNAVHDPTGQTCPPGAKPRVTATLWEDEGSLCYQVEAKGVCVARREDNHMINGTKLLNVAGMTRGRRDGILKSEKVRHVVKIGPMHLKGVWIPYERALDFANKEKITDLLYPLFVHNIGGLLYHPANSNRTNMVVHDSQQRRLEGSQTARTSQGPQAPALHHHHSMNGSVPSHMPQASASTPQTNGRPELNRAHTFPTPPASASSLIGIPNQGSTYDWNSQNINSTVQTSQNVPIDNGLNSTRSMPTTPATTPPGNNLQGMPPYQNQPAYDSSKSYYSAAPSSQAQYASQPLPAHSLTYGQPMMKDLGSSGRPPLGPVEQEHDEVKVDRYNQPNGQVTNGTEEENGQQQEPEYVQDNVAGSYANRNSYTYTTNPSVSSLSGDHSQLGGSPSHQNGSDRMTPRTAGTNPPPQWSQGYNTPPRAVPAGSISNIVSDTRGAPNGDSYAPGTAYASNYSGYSSVNGSSMGSTKRMRDDDDDHLSRSDGRENEYETKRRKTLTEPPVGGAFMQMQQQPVPAGGVMRRR</sequence>